<reference key="1">
    <citation type="journal article" date="2005" name="Nature">
        <title>The genome of the social amoeba Dictyostelium discoideum.</title>
        <authorList>
            <person name="Eichinger L."/>
            <person name="Pachebat J.A."/>
            <person name="Gloeckner G."/>
            <person name="Rajandream M.A."/>
            <person name="Sucgang R."/>
            <person name="Berriman M."/>
            <person name="Song J."/>
            <person name="Olsen R."/>
            <person name="Szafranski K."/>
            <person name="Xu Q."/>
            <person name="Tunggal B."/>
            <person name="Kummerfeld S."/>
            <person name="Madera M."/>
            <person name="Konfortov B.A."/>
            <person name="Rivero F."/>
            <person name="Bankier A.T."/>
            <person name="Lehmann R."/>
            <person name="Hamlin N."/>
            <person name="Davies R."/>
            <person name="Gaudet P."/>
            <person name="Fey P."/>
            <person name="Pilcher K."/>
            <person name="Chen G."/>
            <person name="Saunders D."/>
            <person name="Sodergren E.J."/>
            <person name="Davis P."/>
            <person name="Kerhornou A."/>
            <person name="Nie X."/>
            <person name="Hall N."/>
            <person name="Anjard C."/>
            <person name="Hemphill L."/>
            <person name="Bason N."/>
            <person name="Farbrother P."/>
            <person name="Desany B."/>
            <person name="Just E."/>
            <person name="Morio T."/>
            <person name="Rost R."/>
            <person name="Churcher C.M."/>
            <person name="Cooper J."/>
            <person name="Haydock S."/>
            <person name="van Driessche N."/>
            <person name="Cronin A."/>
            <person name="Goodhead I."/>
            <person name="Muzny D.M."/>
            <person name="Mourier T."/>
            <person name="Pain A."/>
            <person name="Lu M."/>
            <person name="Harper D."/>
            <person name="Lindsay R."/>
            <person name="Hauser H."/>
            <person name="James K.D."/>
            <person name="Quiles M."/>
            <person name="Madan Babu M."/>
            <person name="Saito T."/>
            <person name="Buchrieser C."/>
            <person name="Wardroper A."/>
            <person name="Felder M."/>
            <person name="Thangavelu M."/>
            <person name="Johnson D."/>
            <person name="Knights A."/>
            <person name="Loulseged H."/>
            <person name="Mungall K.L."/>
            <person name="Oliver K."/>
            <person name="Price C."/>
            <person name="Quail M.A."/>
            <person name="Urushihara H."/>
            <person name="Hernandez J."/>
            <person name="Rabbinowitsch E."/>
            <person name="Steffen D."/>
            <person name="Sanders M."/>
            <person name="Ma J."/>
            <person name="Kohara Y."/>
            <person name="Sharp S."/>
            <person name="Simmonds M.N."/>
            <person name="Spiegler S."/>
            <person name="Tivey A."/>
            <person name="Sugano S."/>
            <person name="White B."/>
            <person name="Walker D."/>
            <person name="Woodward J.R."/>
            <person name="Winckler T."/>
            <person name="Tanaka Y."/>
            <person name="Shaulsky G."/>
            <person name="Schleicher M."/>
            <person name="Weinstock G.M."/>
            <person name="Rosenthal A."/>
            <person name="Cox E.C."/>
            <person name="Chisholm R.L."/>
            <person name="Gibbs R.A."/>
            <person name="Loomis W.F."/>
            <person name="Platzer M."/>
            <person name="Kay R.R."/>
            <person name="Williams J.G."/>
            <person name="Dear P.H."/>
            <person name="Noegel A.A."/>
            <person name="Barrell B.G."/>
            <person name="Kuspa A."/>
        </authorList>
    </citation>
    <scope>NUCLEOTIDE SEQUENCE [LARGE SCALE GENOMIC DNA]</scope>
    <source>
        <strain>AX4</strain>
    </source>
</reference>
<sequence>MSKESQVNKCDRYTWSQTLNDCTLSIKLENPVKSKDLFIKIDNDHLTVKNLITNDTIIDGKLYKNVKKSDCNWTLESGKNLEIELFKLKGQEWWSCIIQGESEIDVTQIKPQNSSLSDFDGETRAMVEKMLYNQNRKAQGLPTTDEEEKQRIFETFKNEHPDMDFSNAKFN</sequence>
<gene>
    <name type="primary">nudc</name>
    <name type="ORF">DDB_G0286159</name>
</gene>
<dbReference type="EMBL" id="AAFI02000085">
    <property type="protein sequence ID" value="EAL64372.1"/>
    <property type="molecule type" value="Genomic_DNA"/>
</dbReference>
<dbReference type="RefSeq" id="XP_637884.1">
    <property type="nucleotide sequence ID" value="XM_632792.1"/>
</dbReference>
<dbReference type="SMR" id="Q54M64"/>
<dbReference type="FunCoup" id="Q54M64">
    <property type="interactions" value="119"/>
</dbReference>
<dbReference type="STRING" id="44689.Q54M64"/>
<dbReference type="PaxDb" id="44689-DDB0266415"/>
<dbReference type="EnsemblProtists" id="EAL64372">
    <property type="protein sequence ID" value="EAL64372"/>
    <property type="gene ID" value="DDB_G0286159"/>
</dbReference>
<dbReference type="GeneID" id="8625481"/>
<dbReference type="KEGG" id="ddi:DDB_G0286159"/>
<dbReference type="dictyBase" id="DDB_G0286159">
    <property type="gene designation" value="nudc"/>
</dbReference>
<dbReference type="VEuPathDB" id="AmoebaDB:DDB_G0286159"/>
<dbReference type="eggNOG" id="KOG2265">
    <property type="taxonomic scope" value="Eukaryota"/>
</dbReference>
<dbReference type="HOGENOM" id="CLU_047332_2_0_1"/>
<dbReference type="InParanoid" id="Q54M64"/>
<dbReference type="OMA" id="RQKEMGG"/>
<dbReference type="PhylomeDB" id="Q54M64"/>
<dbReference type="Reactome" id="R-DDI-9648025">
    <property type="pathway name" value="EML4 and NUDC in mitotic spindle formation"/>
</dbReference>
<dbReference type="PRO" id="PR:Q54M64"/>
<dbReference type="Proteomes" id="UP000002195">
    <property type="component" value="Chromosome 4"/>
</dbReference>
<dbReference type="GO" id="GO:0005737">
    <property type="term" value="C:cytoplasm"/>
    <property type="evidence" value="ECO:0000318"/>
    <property type="project" value="GO_Central"/>
</dbReference>
<dbReference type="GO" id="GO:0005874">
    <property type="term" value="C:microtubule"/>
    <property type="evidence" value="ECO:0007669"/>
    <property type="project" value="UniProtKB-KW"/>
</dbReference>
<dbReference type="GO" id="GO:0051082">
    <property type="term" value="F:unfolded protein binding"/>
    <property type="evidence" value="ECO:0000318"/>
    <property type="project" value="GO_Central"/>
</dbReference>
<dbReference type="GO" id="GO:0051301">
    <property type="term" value="P:cell division"/>
    <property type="evidence" value="ECO:0007669"/>
    <property type="project" value="UniProtKB-KW"/>
</dbReference>
<dbReference type="GO" id="GO:0000741">
    <property type="term" value="P:karyogamy"/>
    <property type="evidence" value="ECO:0007669"/>
    <property type="project" value="UniProtKB-KW"/>
</dbReference>
<dbReference type="GO" id="GO:0006457">
    <property type="term" value="P:protein folding"/>
    <property type="evidence" value="ECO:0000318"/>
    <property type="project" value="GO_Central"/>
</dbReference>
<dbReference type="CDD" id="cd06467">
    <property type="entry name" value="p23_NUDC_like"/>
    <property type="match status" value="1"/>
</dbReference>
<dbReference type="FunFam" id="2.60.40.790:FF:000001">
    <property type="entry name" value="Nuclear migration protein nudC"/>
    <property type="match status" value="1"/>
</dbReference>
<dbReference type="Gene3D" id="2.60.40.790">
    <property type="match status" value="1"/>
</dbReference>
<dbReference type="InterPro" id="IPR007052">
    <property type="entry name" value="CS_dom"/>
</dbReference>
<dbReference type="InterPro" id="IPR008978">
    <property type="entry name" value="HSP20-like_chaperone"/>
</dbReference>
<dbReference type="InterPro" id="IPR037898">
    <property type="entry name" value="NudC_fam"/>
</dbReference>
<dbReference type="PANTHER" id="PTHR12356:SF3">
    <property type="entry name" value="NUCLEAR MIGRATION PROTEIN NUDC"/>
    <property type="match status" value="1"/>
</dbReference>
<dbReference type="PANTHER" id="PTHR12356">
    <property type="entry name" value="NUCLEAR MOVEMENT PROTEIN NUDC"/>
    <property type="match status" value="1"/>
</dbReference>
<dbReference type="Pfam" id="PF04969">
    <property type="entry name" value="CS"/>
    <property type="match status" value="1"/>
</dbReference>
<dbReference type="SUPFAM" id="SSF49764">
    <property type="entry name" value="HSP20-like chaperones"/>
    <property type="match status" value="1"/>
</dbReference>
<dbReference type="PROSITE" id="PS51203">
    <property type="entry name" value="CS"/>
    <property type="match status" value="1"/>
</dbReference>
<feature type="chain" id="PRO_0000327735" description="Nuclear movement protein nudC">
    <location>
        <begin position="1"/>
        <end position="171"/>
    </location>
</feature>
<feature type="domain" description="CS" evidence="2">
    <location>
        <begin position="8"/>
        <end position="98"/>
    </location>
</feature>
<protein>
    <recommendedName>
        <fullName>Nuclear movement protein nudC</fullName>
    </recommendedName>
    <alternativeName>
        <fullName>Nuclear distribution protein C homolog</fullName>
    </alternativeName>
</protein>
<organism>
    <name type="scientific">Dictyostelium discoideum</name>
    <name type="common">Social amoeba</name>
    <dbReference type="NCBI Taxonomy" id="44689"/>
    <lineage>
        <taxon>Eukaryota</taxon>
        <taxon>Amoebozoa</taxon>
        <taxon>Evosea</taxon>
        <taxon>Eumycetozoa</taxon>
        <taxon>Dictyostelia</taxon>
        <taxon>Dictyosteliales</taxon>
        <taxon>Dictyosteliaceae</taxon>
        <taxon>Dictyostelium</taxon>
    </lineage>
</organism>
<evidence type="ECO:0000250" key="1"/>
<evidence type="ECO:0000255" key="2">
    <source>
        <dbReference type="PROSITE-ProRule" id="PRU00547"/>
    </source>
</evidence>
<evidence type="ECO:0000305" key="3"/>
<comment type="function">
    <text evidence="1">Required for nuclear movement. May interact between microtubules and nuclei and/or may be involved in the generation of force used to move nuclei during interphase (By similarity).</text>
</comment>
<comment type="subcellular location">
    <subcellularLocation>
        <location evidence="1">Cytoplasm</location>
        <location evidence="1">Cytoskeleton</location>
    </subcellularLocation>
</comment>
<comment type="similarity">
    <text evidence="3">Belongs to the nudC family.</text>
</comment>
<keyword id="KW-0131">Cell cycle</keyword>
<keyword id="KW-0132">Cell division</keyword>
<keyword id="KW-0963">Cytoplasm</keyword>
<keyword id="KW-0206">Cytoskeleton</keyword>
<keyword id="KW-0415">Karyogamy</keyword>
<keyword id="KW-0493">Microtubule</keyword>
<keyword id="KW-0498">Mitosis</keyword>
<keyword id="KW-1185">Reference proteome</keyword>
<proteinExistence type="inferred from homology"/>
<name>NUDC_DICDI</name>
<accession>Q54M64</accession>